<feature type="chain" id="PRO_1000080713" description="Transcriptional repressor NrdR">
    <location>
        <begin position="1"/>
        <end position="160"/>
    </location>
</feature>
<feature type="domain" description="ATP-cone" evidence="1">
    <location>
        <begin position="49"/>
        <end position="139"/>
    </location>
</feature>
<feature type="zinc finger region" evidence="1">
    <location>
        <begin position="3"/>
        <end position="34"/>
    </location>
</feature>
<reference key="1">
    <citation type="submission" date="2006-12" db="EMBL/GenBank/DDBJ databases">
        <authorList>
            <person name="Hendrix L."/>
            <person name="Mohamoud Y."/>
            <person name="Radune D."/>
            <person name="Shvartsbeyn A."/>
            <person name="Daugherty S."/>
            <person name="Dodson R."/>
            <person name="Durkin A.S."/>
            <person name="Harkins D."/>
            <person name="Huot H."/>
            <person name="Kothari S.P."/>
            <person name="Madupu R."/>
            <person name="Li J."/>
            <person name="Nelson W.C."/>
            <person name="Shrivastava S."/>
            <person name="Giglio M.G."/>
            <person name="Haft D."/>
            <person name="Selengut J."/>
            <person name="Fraser-Ligget C."/>
            <person name="Seshadri R."/>
        </authorList>
    </citation>
    <scope>NUCLEOTIDE SEQUENCE [LARGE SCALE GENOMIC DNA]</scope>
    <source>
        <strain>ATCC 35685 / KC583 / Herrer 020/F12,63</strain>
    </source>
</reference>
<proteinExistence type="inferred from homology"/>
<protein>
    <recommendedName>
        <fullName evidence="1">Transcriptional repressor NrdR</fullName>
    </recommendedName>
</protein>
<comment type="function">
    <text evidence="1">Negatively regulates transcription of bacterial ribonucleotide reductase nrd genes and operons by binding to NrdR-boxes.</text>
</comment>
<comment type="cofactor">
    <cofactor evidence="1">
        <name>Zn(2+)</name>
        <dbReference type="ChEBI" id="CHEBI:29105"/>
    </cofactor>
    <text evidence="1">Binds 1 zinc ion.</text>
</comment>
<comment type="similarity">
    <text evidence="1">Belongs to the NrdR family.</text>
</comment>
<evidence type="ECO:0000255" key="1">
    <source>
        <dbReference type="HAMAP-Rule" id="MF_00440"/>
    </source>
</evidence>
<dbReference type="EMBL" id="CP000524">
    <property type="protein sequence ID" value="ABM44932.1"/>
    <property type="molecule type" value="Genomic_DNA"/>
</dbReference>
<dbReference type="RefSeq" id="WP_005766835.1">
    <property type="nucleotide sequence ID" value="NC_008783.1"/>
</dbReference>
<dbReference type="SMR" id="A1USI1"/>
<dbReference type="STRING" id="360095.BARBAKC583_0630"/>
<dbReference type="GeneID" id="4685085"/>
<dbReference type="KEGG" id="bbk:BARBAKC583_0630"/>
<dbReference type="PATRIC" id="fig|360095.6.peg.614"/>
<dbReference type="eggNOG" id="COG1327">
    <property type="taxonomic scope" value="Bacteria"/>
</dbReference>
<dbReference type="HOGENOM" id="CLU_108412_0_1_5"/>
<dbReference type="OrthoDB" id="9807461at2"/>
<dbReference type="Proteomes" id="UP000000643">
    <property type="component" value="Chromosome"/>
</dbReference>
<dbReference type="GO" id="GO:0005524">
    <property type="term" value="F:ATP binding"/>
    <property type="evidence" value="ECO:0007669"/>
    <property type="project" value="UniProtKB-KW"/>
</dbReference>
<dbReference type="GO" id="GO:0003677">
    <property type="term" value="F:DNA binding"/>
    <property type="evidence" value="ECO:0007669"/>
    <property type="project" value="UniProtKB-KW"/>
</dbReference>
<dbReference type="GO" id="GO:0008270">
    <property type="term" value="F:zinc ion binding"/>
    <property type="evidence" value="ECO:0007669"/>
    <property type="project" value="UniProtKB-UniRule"/>
</dbReference>
<dbReference type="GO" id="GO:0045892">
    <property type="term" value="P:negative regulation of DNA-templated transcription"/>
    <property type="evidence" value="ECO:0007669"/>
    <property type="project" value="UniProtKB-UniRule"/>
</dbReference>
<dbReference type="HAMAP" id="MF_00440">
    <property type="entry name" value="NrdR"/>
    <property type="match status" value="1"/>
</dbReference>
<dbReference type="InterPro" id="IPR005144">
    <property type="entry name" value="ATP-cone_dom"/>
</dbReference>
<dbReference type="InterPro" id="IPR055173">
    <property type="entry name" value="NrdR-like_N"/>
</dbReference>
<dbReference type="InterPro" id="IPR003796">
    <property type="entry name" value="RNR_NrdR-like"/>
</dbReference>
<dbReference type="NCBIfam" id="TIGR00244">
    <property type="entry name" value="transcriptional regulator NrdR"/>
    <property type="match status" value="1"/>
</dbReference>
<dbReference type="PANTHER" id="PTHR30455">
    <property type="entry name" value="TRANSCRIPTIONAL REPRESSOR NRDR"/>
    <property type="match status" value="1"/>
</dbReference>
<dbReference type="PANTHER" id="PTHR30455:SF2">
    <property type="entry name" value="TRANSCRIPTIONAL REPRESSOR NRDR"/>
    <property type="match status" value="1"/>
</dbReference>
<dbReference type="Pfam" id="PF03477">
    <property type="entry name" value="ATP-cone"/>
    <property type="match status" value="1"/>
</dbReference>
<dbReference type="Pfam" id="PF22811">
    <property type="entry name" value="Zn_ribbon_NrdR"/>
    <property type="match status" value="1"/>
</dbReference>
<dbReference type="PROSITE" id="PS51161">
    <property type="entry name" value="ATP_CONE"/>
    <property type="match status" value="1"/>
</dbReference>
<sequence length="160" mass="18656">MRCPYCQCEDTQVKDSRPAEEGAVIRRRRVCSVCGGRFTTFERVQLRELLVLKKSGRRELFNRDKLMKSVDLAMRKRNIDPDRIERAISGIVRRLESLGEPEIASEKIGYLVMESLKRIDDIAYIRFASVYRDFRNASDFHDIIDELSKDVADIESCFDE</sequence>
<gene>
    <name evidence="1" type="primary">nrdR</name>
    <name type="ordered locus">BARBAKC583_0630</name>
</gene>
<keyword id="KW-0067">ATP-binding</keyword>
<keyword id="KW-0238">DNA-binding</keyword>
<keyword id="KW-0479">Metal-binding</keyword>
<keyword id="KW-0547">Nucleotide-binding</keyword>
<keyword id="KW-0678">Repressor</keyword>
<keyword id="KW-0804">Transcription</keyword>
<keyword id="KW-0805">Transcription regulation</keyword>
<keyword id="KW-0862">Zinc</keyword>
<keyword id="KW-0863">Zinc-finger</keyword>
<organism>
    <name type="scientific">Bartonella bacilliformis (strain ATCC 35685 / KC583 / Herrer 020/F12,63)</name>
    <dbReference type="NCBI Taxonomy" id="360095"/>
    <lineage>
        <taxon>Bacteria</taxon>
        <taxon>Pseudomonadati</taxon>
        <taxon>Pseudomonadota</taxon>
        <taxon>Alphaproteobacteria</taxon>
        <taxon>Hyphomicrobiales</taxon>
        <taxon>Bartonellaceae</taxon>
        <taxon>Bartonella</taxon>
    </lineage>
</organism>
<name>NRDR_BARBK</name>
<accession>A1USI1</accession>